<name>DXS_FRATN</name>
<accession>A0Q6B9</accession>
<reference key="1">
    <citation type="journal article" date="2007" name="Genome Biol.">
        <title>Comparison of Francisella tularensis genomes reveals evolutionary events associated with the emergence of human pathogenic strains.</title>
        <authorList>
            <person name="Rohmer L."/>
            <person name="Fong C."/>
            <person name="Abmayr S."/>
            <person name="Wasnick M."/>
            <person name="Larson Freeman T.J."/>
            <person name="Radey M."/>
            <person name="Guina T."/>
            <person name="Svensson K."/>
            <person name="Hayden H.S."/>
            <person name="Jacobs M."/>
            <person name="Gallagher L.A."/>
            <person name="Manoil C."/>
            <person name="Ernst R.K."/>
            <person name="Drees B."/>
            <person name="Buckley D."/>
            <person name="Haugen E."/>
            <person name="Bovee D."/>
            <person name="Zhou Y."/>
            <person name="Chang J."/>
            <person name="Levy R."/>
            <person name="Lim R."/>
            <person name="Gillett W."/>
            <person name="Guenthener D."/>
            <person name="Kang A."/>
            <person name="Shaffer S.A."/>
            <person name="Taylor G."/>
            <person name="Chen J."/>
            <person name="Gallis B."/>
            <person name="D'Argenio D.A."/>
            <person name="Forsman M."/>
            <person name="Olson M.V."/>
            <person name="Goodlett D.R."/>
            <person name="Kaul R."/>
            <person name="Miller S.I."/>
            <person name="Brittnacher M.J."/>
        </authorList>
    </citation>
    <scope>NUCLEOTIDE SEQUENCE [LARGE SCALE GENOMIC DNA]</scope>
    <source>
        <strain>U112</strain>
    </source>
</reference>
<comment type="function">
    <text evidence="1">Catalyzes the acyloin condensation reaction between C atoms 2 and 3 of pyruvate and glyceraldehyde 3-phosphate to yield 1-deoxy-D-xylulose-5-phosphate (DXP).</text>
</comment>
<comment type="catalytic activity">
    <reaction evidence="1">
        <text>D-glyceraldehyde 3-phosphate + pyruvate + H(+) = 1-deoxy-D-xylulose 5-phosphate + CO2</text>
        <dbReference type="Rhea" id="RHEA:12605"/>
        <dbReference type="ChEBI" id="CHEBI:15361"/>
        <dbReference type="ChEBI" id="CHEBI:15378"/>
        <dbReference type="ChEBI" id="CHEBI:16526"/>
        <dbReference type="ChEBI" id="CHEBI:57792"/>
        <dbReference type="ChEBI" id="CHEBI:59776"/>
        <dbReference type="EC" id="2.2.1.7"/>
    </reaction>
</comment>
<comment type="cofactor">
    <cofactor evidence="1">
        <name>Mg(2+)</name>
        <dbReference type="ChEBI" id="CHEBI:18420"/>
    </cofactor>
    <text evidence="1">Binds 1 Mg(2+) ion per subunit.</text>
</comment>
<comment type="cofactor">
    <cofactor evidence="1">
        <name>thiamine diphosphate</name>
        <dbReference type="ChEBI" id="CHEBI:58937"/>
    </cofactor>
    <text evidence="1">Binds 1 thiamine pyrophosphate per subunit.</text>
</comment>
<comment type="pathway">
    <text evidence="1">Metabolic intermediate biosynthesis; 1-deoxy-D-xylulose 5-phosphate biosynthesis; 1-deoxy-D-xylulose 5-phosphate from D-glyceraldehyde 3-phosphate and pyruvate: step 1/1.</text>
</comment>
<comment type="subunit">
    <text evidence="1">Homodimer.</text>
</comment>
<comment type="similarity">
    <text evidence="1">Belongs to the transketolase family. DXPS subfamily.</text>
</comment>
<evidence type="ECO:0000255" key="1">
    <source>
        <dbReference type="HAMAP-Rule" id="MF_00315"/>
    </source>
</evidence>
<keyword id="KW-0414">Isoprene biosynthesis</keyword>
<keyword id="KW-0460">Magnesium</keyword>
<keyword id="KW-0479">Metal-binding</keyword>
<keyword id="KW-0784">Thiamine biosynthesis</keyword>
<keyword id="KW-0786">Thiamine pyrophosphate</keyword>
<keyword id="KW-0808">Transferase</keyword>
<dbReference type="EC" id="2.2.1.7" evidence="1"/>
<dbReference type="EMBL" id="CP000439">
    <property type="protein sequence ID" value="ABK89784.1"/>
    <property type="molecule type" value="Genomic_DNA"/>
</dbReference>
<dbReference type="RefSeq" id="WP_003039201.1">
    <property type="nucleotide sequence ID" value="NZ_CP009633.1"/>
</dbReference>
<dbReference type="SMR" id="A0Q6B9"/>
<dbReference type="KEGG" id="ftn:FTN_0896"/>
<dbReference type="KEGG" id="ftx:AW25_1122"/>
<dbReference type="BioCyc" id="FTUL401614:G1G75-934-MONOMER"/>
<dbReference type="UniPathway" id="UPA00064">
    <property type="reaction ID" value="UER00091"/>
</dbReference>
<dbReference type="Proteomes" id="UP000000762">
    <property type="component" value="Chromosome"/>
</dbReference>
<dbReference type="GO" id="GO:0005829">
    <property type="term" value="C:cytosol"/>
    <property type="evidence" value="ECO:0007669"/>
    <property type="project" value="TreeGrafter"/>
</dbReference>
<dbReference type="GO" id="GO:0008661">
    <property type="term" value="F:1-deoxy-D-xylulose-5-phosphate synthase activity"/>
    <property type="evidence" value="ECO:0007669"/>
    <property type="project" value="UniProtKB-UniRule"/>
</dbReference>
<dbReference type="GO" id="GO:0000287">
    <property type="term" value="F:magnesium ion binding"/>
    <property type="evidence" value="ECO:0007669"/>
    <property type="project" value="UniProtKB-UniRule"/>
</dbReference>
<dbReference type="GO" id="GO:0030976">
    <property type="term" value="F:thiamine pyrophosphate binding"/>
    <property type="evidence" value="ECO:0007669"/>
    <property type="project" value="UniProtKB-UniRule"/>
</dbReference>
<dbReference type="GO" id="GO:0052865">
    <property type="term" value="P:1-deoxy-D-xylulose 5-phosphate biosynthetic process"/>
    <property type="evidence" value="ECO:0007669"/>
    <property type="project" value="UniProtKB-UniPathway"/>
</dbReference>
<dbReference type="GO" id="GO:0019288">
    <property type="term" value="P:isopentenyl diphosphate biosynthetic process, methylerythritol 4-phosphate pathway"/>
    <property type="evidence" value="ECO:0007669"/>
    <property type="project" value="TreeGrafter"/>
</dbReference>
<dbReference type="GO" id="GO:0016114">
    <property type="term" value="P:terpenoid biosynthetic process"/>
    <property type="evidence" value="ECO:0007669"/>
    <property type="project" value="UniProtKB-UniRule"/>
</dbReference>
<dbReference type="GO" id="GO:0009228">
    <property type="term" value="P:thiamine biosynthetic process"/>
    <property type="evidence" value="ECO:0007669"/>
    <property type="project" value="UniProtKB-UniRule"/>
</dbReference>
<dbReference type="CDD" id="cd02007">
    <property type="entry name" value="TPP_DXS"/>
    <property type="match status" value="1"/>
</dbReference>
<dbReference type="CDD" id="cd07033">
    <property type="entry name" value="TPP_PYR_DXS_TK_like"/>
    <property type="match status" value="1"/>
</dbReference>
<dbReference type="FunFam" id="3.40.50.970:FF:000005">
    <property type="entry name" value="1-deoxy-D-xylulose-5-phosphate synthase"/>
    <property type="match status" value="1"/>
</dbReference>
<dbReference type="Gene3D" id="3.40.50.920">
    <property type="match status" value="1"/>
</dbReference>
<dbReference type="Gene3D" id="3.40.50.970">
    <property type="match status" value="2"/>
</dbReference>
<dbReference type="HAMAP" id="MF_00315">
    <property type="entry name" value="DXP_synth"/>
    <property type="match status" value="1"/>
</dbReference>
<dbReference type="InterPro" id="IPR005477">
    <property type="entry name" value="Dxylulose-5-P_synthase"/>
</dbReference>
<dbReference type="InterPro" id="IPR029061">
    <property type="entry name" value="THDP-binding"/>
</dbReference>
<dbReference type="InterPro" id="IPR009014">
    <property type="entry name" value="Transketo_C/PFOR_II"/>
</dbReference>
<dbReference type="InterPro" id="IPR005475">
    <property type="entry name" value="Transketolase-like_Pyr-bd"/>
</dbReference>
<dbReference type="InterPro" id="IPR020826">
    <property type="entry name" value="Transketolase_BS"/>
</dbReference>
<dbReference type="InterPro" id="IPR033248">
    <property type="entry name" value="Transketolase_C"/>
</dbReference>
<dbReference type="InterPro" id="IPR049557">
    <property type="entry name" value="Transketolase_CS"/>
</dbReference>
<dbReference type="NCBIfam" id="TIGR00204">
    <property type="entry name" value="dxs"/>
    <property type="match status" value="1"/>
</dbReference>
<dbReference type="NCBIfam" id="NF003933">
    <property type="entry name" value="PRK05444.2-2"/>
    <property type="match status" value="1"/>
</dbReference>
<dbReference type="PANTHER" id="PTHR43322">
    <property type="entry name" value="1-D-DEOXYXYLULOSE 5-PHOSPHATE SYNTHASE-RELATED"/>
    <property type="match status" value="1"/>
</dbReference>
<dbReference type="PANTHER" id="PTHR43322:SF5">
    <property type="entry name" value="1-DEOXY-D-XYLULOSE-5-PHOSPHATE SYNTHASE, CHLOROPLASTIC"/>
    <property type="match status" value="1"/>
</dbReference>
<dbReference type="Pfam" id="PF13292">
    <property type="entry name" value="DXP_synthase_N"/>
    <property type="match status" value="1"/>
</dbReference>
<dbReference type="Pfam" id="PF02779">
    <property type="entry name" value="Transket_pyr"/>
    <property type="match status" value="1"/>
</dbReference>
<dbReference type="Pfam" id="PF02780">
    <property type="entry name" value="Transketolase_C"/>
    <property type="match status" value="1"/>
</dbReference>
<dbReference type="SMART" id="SM00861">
    <property type="entry name" value="Transket_pyr"/>
    <property type="match status" value="1"/>
</dbReference>
<dbReference type="SUPFAM" id="SSF52518">
    <property type="entry name" value="Thiamin diphosphate-binding fold (THDP-binding)"/>
    <property type="match status" value="2"/>
</dbReference>
<dbReference type="SUPFAM" id="SSF52922">
    <property type="entry name" value="TK C-terminal domain-like"/>
    <property type="match status" value="1"/>
</dbReference>
<dbReference type="PROSITE" id="PS00801">
    <property type="entry name" value="TRANSKETOLASE_1"/>
    <property type="match status" value="1"/>
</dbReference>
<dbReference type="PROSITE" id="PS00802">
    <property type="entry name" value="TRANSKETOLASE_2"/>
    <property type="match status" value="1"/>
</dbReference>
<gene>
    <name evidence="1" type="primary">dxs</name>
    <name type="ordered locus">FTN_0896</name>
</gene>
<protein>
    <recommendedName>
        <fullName evidence="1">1-deoxy-D-xylulose-5-phosphate synthase</fullName>
        <ecNumber evidence="1">2.2.1.7</ecNumber>
    </recommendedName>
    <alternativeName>
        <fullName evidence="1">1-deoxyxylulose-5-phosphate synthase</fullName>
        <shortName evidence="1">DXP synthase</shortName>
        <shortName evidence="1">DXPS</shortName>
    </alternativeName>
</protein>
<feature type="chain" id="PRO_1000019027" description="1-deoxy-D-xylulose-5-phosphate synthase">
    <location>
        <begin position="1"/>
        <end position="615"/>
    </location>
</feature>
<feature type="binding site" evidence="1">
    <location>
        <position position="76"/>
    </location>
    <ligand>
        <name>thiamine diphosphate</name>
        <dbReference type="ChEBI" id="CHEBI:58937"/>
    </ligand>
</feature>
<feature type="binding site" evidence="1">
    <location>
        <begin position="117"/>
        <end position="119"/>
    </location>
    <ligand>
        <name>thiamine diphosphate</name>
        <dbReference type="ChEBI" id="CHEBI:58937"/>
    </ligand>
</feature>
<feature type="binding site" evidence="1">
    <location>
        <position position="148"/>
    </location>
    <ligand>
        <name>Mg(2+)</name>
        <dbReference type="ChEBI" id="CHEBI:18420"/>
    </ligand>
</feature>
<feature type="binding site" evidence="1">
    <location>
        <begin position="149"/>
        <end position="150"/>
    </location>
    <ligand>
        <name>thiamine diphosphate</name>
        <dbReference type="ChEBI" id="CHEBI:58937"/>
    </ligand>
</feature>
<feature type="binding site" evidence="1">
    <location>
        <position position="177"/>
    </location>
    <ligand>
        <name>Mg(2+)</name>
        <dbReference type="ChEBI" id="CHEBI:18420"/>
    </ligand>
</feature>
<feature type="binding site" evidence="1">
    <location>
        <position position="177"/>
    </location>
    <ligand>
        <name>thiamine diphosphate</name>
        <dbReference type="ChEBI" id="CHEBI:58937"/>
    </ligand>
</feature>
<feature type="binding site" evidence="1">
    <location>
        <position position="284"/>
    </location>
    <ligand>
        <name>thiamine diphosphate</name>
        <dbReference type="ChEBI" id="CHEBI:58937"/>
    </ligand>
</feature>
<feature type="binding site" evidence="1">
    <location>
        <position position="365"/>
    </location>
    <ligand>
        <name>thiamine diphosphate</name>
        <dbReference type="ChEBI" id="CHEBI:58937"/>
    </ligand>
</feature>
<sequence length="615" mass="67322">MSKYTILDKINTPSDLKLIPESQLKILSAELRAFLVDTLDVSGGHFASSLGATELTVALHYVYNAPYDNIVWDVGHQTYIHKILTGRKDKLVTIKKDGGISGFPKRSESEYDTFGVGHSSTSISAALGMAIADRLQGKSSNTVAVIGDGAITGGMAFEALNHAGGIKEDILVILNDNEMSISDNVGGLSAHFSKIISGGFYNSIREKGKEVLKNIPPIFEFVKKVETQTKGMFVPANFFEDLGFYYVGPIDGHDVTELVKTLRILKDHKGPKLLHVITKKGKGYTKAESDPIKFHHVAPSFHSGENVITKASKPTYSNIFGDWICQKAAKDKRLVGITPAMKEGSDLIRFSQLYPHRYFDVAIAEQHAVTFAGGLACQGLKPVVAIYSTFLQRAYDQVIHDIALQNLDVLYAVDRAGLVGADGATHDGSFDLAFMRCIPNHVIMTPSDENEAYHMLELGYEYNGPAMVRYPRGAGIGAEITDSLDLELGKAKIVKQGSKIAILNFGTLLPLAKQLAEKYHATVIDMRFVKPLDEIMLDKVSQTHEIILTLEENCIAGGAGSAVNEYFVAKDLSNKIIVRNFGLQDKFLNHGTKDLLLAQSKLCVENISQELDKLI</sequence>
<organism>
    <name type="scientific">Francisella tularensis subsp. novicida (strain U112)</name>
    <dbReference type="NCBI Taxonomy" id="401614"/>
    <lineage>
        <taxon>Bacteria</taxon>
        <taxon>Pseudomonadati</taxon>
        <taxon>Pseudomonadota</taxon>
        <taxon>Gammaproteobacteria</taxon>
        <taxon>Thiotrichales</taxon>
        <taxon>Francisellaceae</taxon>
        <taxon>Francisella</taxon>
    </lineage>
</organism>
<proteinExistence type="inferred from homology"/>